<reference key="1">
    <citation type="journal article" date="1994" name="Biochem. Biophys. Res. Commun.">
        <title>Structural analysis of cDNAs for subunits of human mitochondrial fatty acid beta-oxidation trifunctional protein.</title>
        <authorList>
            <person name="Kamijo T."/>
            <person name="Aoyama T."/>
            <person name="Komiyama A."/>
            <person name="Hashimoto T."/>
        </authorList>
    </citation>
    <scope>NUCLEOTIDE SEQUENCE [MRNA] (ISOFORM 1)</scope>
    <scope>FUNCTION</scope>
    <scope>CATALYTIC ACTIVITY</scope>
    <scope>PATHWAY</scope>
</reference>
<reference key="2">
    <citation type="journal article" date="1994" name="Biochim. Biophys. Acta">
        <title>Structures of the human cDNA and gene encoding the 78 kDa gastrin-binding protein and of a related pseudogene.</title>
        <authorList>
            <person name="Zhang Q.X."/>
            <person name="Baldwin G.S."/>
        </authorList>
    </citation>
    <scope>NUCLEOTIDE SEQUENCE [MRNA] (ISOFORM 1)</scope>
</reference>
<reference key="3">
    <citation type="journal article" date="2004" name="Nat. Genet.">
        <title>Complete sequencing and characterization of 21,243 full-length human cDNAs.</title>
        <authorList>
            <person name="Ota T."/>
            <person name="Suzuki Y."/>
            <person name="Nishikawa T."/>
            <person name="Otsuki T."/>
            <person name="Sugiyama T."/>
            <person name="Irie R."/>
            <person name="Wakamatsu A."/>
            <person name="Hayashi K."/>
            <person name="Sato H."/>
            <person name="Nagai K."/>
            <person name="Kimura K."/>
            <person name="Makita H."/>
            <person name="Sekine M."/>
            <person name="Obayashi M."/>
            <person name="Nishi T."/>
            <person name="Shibahara T."/>
            <person name="Tanaka T."/>
            <person name="Ishii S."/>
            <person name="Yamamoto J."/>
            <person name="Saito K."/>
            <person name="Kawai Y."/>
            <person name="Isono Y."/>
            <person name="Nakamura Y."/>
            <person name="Nagahari K."/>
            <person name="Murakami K."/>
            <person name="Yasuda T."/>
            <person name="Iwayanagi T."/>
            <person name="Wagatsuma M."/>
            <person name="Shiratori A."/>
            <person name="Sudo H."/>
            <person name="Hosoiri T."/>
            <person name="Kaku Y."/>
            <person name="Kodaira H."/>
            <person name="Kondo H."/>
            <person name="Sugawara M."/>
            <person name="Takahashi M."/>
            <person name="Kanda K."/>
            <person name="Yokoi T."/>
            <person name="Furuya T."/>
            <person name="Kikkawa E."/>
            <person name="Omura Y."/>
            <person name="Abe K."/>
            <person name="Kamihara K."/>
            <person name="Katsuta N."/>
            <person name="Sato K."/>
            <person name="Tanikawa M."/>
            <person name="Yamazaki M."/>
            <person name="Ninomiya K."/>
            <person name="Ishibashi T."/>
            <person name="Yamashita H."/>
            <person name="Murakawa K."/>
            <person name="Fujimori K."/>
            <person name="Tanai H."/>
            <person name="Kimata M."/>
            <person name="Watanabe M."/>
            <person name="Hiraoka S."/>
            <person name="Chiba Y."/>
            <person name="Ishida S."/>
            <person name="Ono Y."/>
            <person name="Takiguchi S."/>
            <person name="Watanabe S."/>
            <person name="Yosida M."/>
            <person name="Hotuta T."/>
            <person name="Kusano J."/>
            <person name="Kanehori K."/>
            <person name="Takahashi-Fujii A."/>
            <person name="Hara H."/>
            <person name="Tanase T.-O."/>
            <person name="Nomura Y."/>
            <person name="Togiya S."/>
            <person name="Komai F."/>
            <person name="Hara R."/>
            <person name="Takeuchi K."/>
            <person name="Arita M."/>
            <person name="Imose N."/>
            <person name="Musashino K."/>
            <person name="Yuuki H."/>
            <person name="Oshima A."/>
            <person name="Sasaki N."/>
            <person name="Aotsuka S."/>
            <person name="Yoshikawa Y."/>
            <person name="Matsunawa H."/>
            <person name="Ichihara T."/>
            <person name="Shiohata N."/>
            <person name="Sano S."/>
            <person name="Moriya S."/>
            <person name="Momiyama H."/>
            <person name="Satoh N."/>
            <person name="Takami S."/>
            <person name="Terashima Y."/>
            <person name="Suzuki O."/>
            <person name="Nakagawa S."/>
            <person name="Senoh A."/>
            <person name="Mizoguchi H."/>
            <person name="Goto Y."/>
            <person name="Shimizu F."/>
            <person name="Wakebe H."/>
            <person name="Hishigaki H."/>
            <person name="Watanabe T."/>
            <person name="Sugiyama A."/>
            <person name="Takemoto M."/>
            <person name="Kawakami B."/>
            <person name="Yamazaki M."/>
            <person name="Watanabe K."/>
            <person name="Kumagai A."/>
            <person name="Itakura S."/>
            <person name="Fukuzumi Y."/>
            <person name="Fujimori Y."/>
            <person name="Komiyama M."/>
            <person name="Tashiro H."/>
            <person name="Tanigami A."/>
            <person name="Fujiwara T."/>
            <person name="Ono T."/>
            <person name="Yamada K."/>
            <person name="Fujii Y."/>
            <person name="Ozaki K."/>
            <person name="Hirao M."/>
            <person name="Ohmori Y."/>
            <person name="Kawabata A."/>
            <person name="Hikiji T."/>
            <person name="Kobatake N."/>
            <person name="Inagaki H."/>
            <person name="Ikema Y."/>
            <person name="Okamoto S."/>
            <person name="Okitani R."/>
            <person name="Kawakami T."/>
            <person name="Noguchi S."/>
            <person name="Itoh T."/>
            <person name="Shigeta K."/>
            <person name="Senba T."/>
            <person name="Matsumura K."/>
            <person name="Nakajima Y."/>
            <person name="Mizuno T."/>
            <person name="Morinaga M."/>
            <person name="Sasaki M."/>
            <person name="Togashi T."/>
            <person name="Oyama M."/>
            <person name="Hata H."/>
            <person name="Watanabe M."/>
            <person name="Komatsu T."/>
            <person name="Mizushima-Sugano J."/>
            <person name="Satoh T."/>
            <person name="Shirai Y."/>
            <person name="Takahashi Y."/>
            <person name="Nakagawa K."/>
            <person name="Okumura K."/>
            <person name="Nagase T."/>
            <person name="Nomura N."/>
            <person name="Kikuchi H."/>
            <person name="Masuho Y."/>
            <person name="Yamashita R."/>
            <person name="Nakai K."/>
            <person name="Yada T."/>
            <person name="Nakamura Y."/>
            <person name="Ohara O."/>
            <person name="Isogai T."/>
            <person name="Sugano S."/>
        </authorList>
    </citation>
    <scope>NUCLEOTIDE SEQUENCE [LARGE SCALE MRNA] (ISOFORMS 1 AND 2)</scope>
    <source>
        <tissue>Amygdala</tissue>
        <tissue>Testis</tissue>
    </source>
</reference>
<reference key="4">
    <citation type="journal article" date="2005" name="Nature">
        <title>Generation and annotation of the DNA sequences of human chromosomes 2 and 4.</title>
        <authorList>
            <person name="Hillier L.W."/>
            <person name="Graves T.A."/>
            <person name="Fulton R.S."/>
            <person name="Fulton L.A."/>
            <person name="Pepin K.H."/>
            <person name="Minx P."/>
            <person name="Wagner-McPherson C."/>
            <person name="Layman D."/>
            <person name="Wylie K."/>
            <person name="Sekhon M."/>
            <person name="Becker M.C."/>
            <person name="Fewell G.A."/>
            <person name="Delehaunty K.D."/>
            <person name="Miner T.L."/>
            <person name="Nash W.E."/>
            <person name="Kremitzki C."/>
            <person name="Oddy L."/>
            <person name="Du H."/>
            <person name="Sun H."/>
            <person name="Bradshaw-Cordum H."/>
            <person name="Ali J."/>
            <person name="Carter J."/>
            <person name="Cordes M."/>
            <person name="Harris A."/>
            <person name="Isak A."/>
            <person name="van Brunt A."/>
            <person name="Nguyen C."/>
            <person name="Du F."/>
            <person name="Courtney L."/>
            <person name="Kalicki J."/>
            <person name="Ozersky P."/>
            <person name="Abbott S."/>
            <person name="Armstrong J."/>
            <person name="Belter E.A."/>
            <person name="Caruso L."/>
            <person name="Cedroni M."/>
            <person name="Cotton M."/>
            <person name="Davidson T."/>
            <person name="Desai A."/>
            <person name="Elliott G."/>
            <person name="Erb T."/>
            <person name="Fronick C."/>
            <person name="Gaige T."/>
            <person name="Haakenson W."/>
            <person name="Haglund K."/>
            <person name="Holmes A."/>
            <person name="Harkins R."/>
            <person name="Kim K."/>
            <person name="Kruchowski S.S."/>
            <person name="Strong C.M."/>
            <person name="Grewal N."/>
            <person name="Goyea E."/>
            <person name="Hou S."/>
            <person name="Levy A."/>
            <person name="Martinka S."/>
            <person name="Mead K."/>
            <person name="McLellan M.D."/>
            <person name="Meyer R."/>
            <person name="Randall-Maher J."/>
            <person name="Tomlinson C."/>
            <person name="Dauphin-Kohlberg S."/>
            <person name="Kozlowicz-Reilly A."/>
            <person name="Shah N."/>
            <person name="Swearengen-Shahid S."/>
            <person name="Snider J."/>
            <person name="Strong J.T."/>
            <person name="Thompson J."/>
            <person name="Yoakum M."/>
            <person name="Leonard S."/>
            <person name="Pearman C."/>
            <person name="Trani L."/>
            <person name="Radionenko M."/>
            <person name="Waligorski J.E."/>
            <person name="Wang C."/>
            <person name="Rock S.M."/>
            <person name="Tin-Wollam A.-M."/>
            <person name="Maupin R."/>
            <person name="Latreille P."/>
            <person name="Wendl M.C."/>
            <person name="Yang S.-P."/>
            <person name="Pohl C."/>
            <person name="Wallis J.W."/>
            <person name="Spieth J."/>
            <person name="Bieri T.A."/>
            <person name="Berkowicz N."/>
            <person name="Nelson J.O."/>
            <person name="Osborne J."/>
            <person name="Ding L."/>
            <person name="Meyer R."/>
            <person name="Sabo A."/>
            <person name="Shotland Y."/>
            <person name="Sinha P."/>
            <person name="Wohldmann P.E."/>
            <person name="Cook L.L."/>
            <person name="Hickenbotham M.T."/>
            <person name="Eldred J."/>
            <person name="Williams D."/>
            <person name="Jones T.A."/>
            <person name="She X."/>
            <person name="Ciccarelli F.D."/>
            <person name="Izaurralde E."/>
            <person name="Taylor J."/>
            <person name="Schmutz J."/>
            <person name="Myers R.M."/>
            <person name="Cox D.R."/>
            <person name="Huang X."/>
            <person name="McPherson J.D."/>
            <person name="Mardis E.R."/>
            <person name="Clifton S.W."/>
            <person name="Warren W.C."/>
            <person name="Chinwalla A.T."/>
            <person name="Eddy S.R."/>
            <person name="Marra M.A."/>
            <person name="Ovcharenko I."/>
            <person name="Furey T.S."/>
            <person name="Miller W."/>
            <person name="Eichler E.E."/>
            <person name="Bork P."/>
            <person name="Suyama M."/>
            <person name="Torrents D."/>
            <person name="Waterston R.H."/>
            <person name="Wilson R.K."/>
        </authorList>
    </citation>
    <scope>NUCLEOTIDE SEQUENCE [LARGE SCALE GENOMIC DNA]</scope>
</reference>
<reference key="5">
    <citation type="submission" date="2005-09" db="EMBL/GenBank/DDBJ databases">
        <authorList>
            <person name="Mural R.J."/>
            <person name="Istrail S."/>
            <person name="Sutton G.G."/>
            <person name="Florea L."/>
            <person name="Halpern A.L."/>
            <person name="Mobarry C.M."/>
            <person name="Lippert R."/>
            <person name="Walenz B."/>
            <person name="Shatkay H."/>
            <person name="Dew I."/>
            <person name="Miller J.R."/>
            <person name="Flanigan M.J."/>
            <person name="Edwards N.J."/>
            <person name="Bolanos R."/>
            <person name="Fasulo D."/>
            <person name="Halldorsson B.V."/>
            <person name="Hannenhalli S."/>
            <person name="Turner R."/>
            <person name="Yooseph S."/>
            <person name="Lu F."/>
            <person name="Nusskern D.R."/>
            <person name="Shue B.C."/>
            <person name="Zheng X.H."/>
            <person name="Zhong F."/>
            <person name="Delcher A.L."/>
            <person name="Huson D.H."/>
            <person name="Kravitz S.A."/>
            <person name="Mouchard L."/>
            <person name="Reinert K."/>
            <person name="Remington K.A."/>
            <person name="Clark A.G."/>
            <person name="Waterman M.S."/>
            <person name="Eichler E.E."/>
            <person name="Adams M.D."/>
            <person name="Hunkapiller M.W."/>
            <person name="Myers E.W."/>
            <person name="Venter J.C."/>
        </authorList>
    </citation>
    <scope>NUCLEOTIDE SEQUENCE [LARGE SCALE GENOMIC DNA]</scope>
</reference>
<reference key="6">
    <citation type="journal article" date="2004" name="Genome Res.">
        <title>The status, quality, and expansion of the NIH full-length cDNA project: the Mammalian Gene Collection (MGC).</title>
        <authorList>
            <consortium name="The MGC Project Team"/>
        </authorList>
    </citation>
    <scope>NUCLEOTIDE SEQUENCE [LARGE SCALE MRNA] (ISOFORM 1)</scope>
    <source>
        <tissue>Lymph</tissue>
    </source>
</reference>
<reference key="7">
    <citation type="journal article" date="1999" name="J. Biol. Chem.">
        <title>Genes for the human mitochondrial trifunctional protein alpha- and beta-subunits are divergently transcribed from a common promoter region.</title>
        <authorList>
            <person name="Orii K.E."/>
            <person name="Orii K.O."/>
            <person name="Souri M."/>
            <person name="Orii T."/>
            <person name="Kondo N."/>
            <person name="Hashimoto T."/>
            <person name="Aoyama T."/>
        </authorList>
    </citation>
    <scope>NUCLEOTIDE SEQUENCE [GENOMIC DNA] OF 1-22</scope>
</reference>
<reference key="8">
    <citation type="journal article" date="1992" name="Biochem. Biophys. Res. Commun.">
        <title>Human liver long-chain 3-hydroxyacyl-coenzyme A dehydrogenase is a multifunctional membrane-bound beta-oxidation enzyme of mitochondria.</title>
        <authorList>
            <person name="Carpenter K."/>
            <person name="Pollitt R.J."/>
            <person name="Middleton B."/>
        </authorList>
    </citation>
    <scope>FUNCTION</scope>
    <scope>CATALYTIC ACTIVITY</scope>
    <scope>PATHWAY</scope>
</reference>
<reference key="9">
    <citation type="journal article" date="1994" name="J. Clin. Invest.">
        <title>Mitochondrial trifunctional protein deficiency. Catalytic heterogeneity of the mutant enzyme in two patients.</title>
        <authorList>
            <person name="Kamijo T."/>
            <person name="Wanders R.J."/>
            <person name="Saudubray J.-M."/>
            <person name="Aoyama T."/>
            <person name="Komiyama A."/>
            <person name="Hashimoto T."/>
        </authorList>
    </citation>
    <scope>CATALYTIC ACTIVITY</scope>
    <scope>SUBUNIT</scope>
</reference>
<reference key="10">
    <citation type="journal article" date="1996" name="Am. J. Hum. Genet.">
        <title>Molecular characterization of mitochondrial trifunctional protein deficiency: formation of the enzyme complex is important for stabilization of both alpha- and beta-subunits.</title>
        <authorList>
            <person name="Ushikubo S."/>
            <person name="Aoyama T."/>
            <person name="Kamijo T."/>
            <person name="Wanders R.J.A."/>
            <person name="Rinaldo P."/>
            <person name="Vockley J."/>
            <person name="Hashimoto T."/>
        </authorList>
    </citation>
    <scope>CATALYTIC ACTIVITY</scope>
</reference>
<reference key="11">
    <citation type="journal article" date="2009" name="Science">
        <title>Lysine acetylation targets protein complexes and co-regulates major cellular functions.</title>
        <authorList>
            <person name="Choudhary C."/>
            <person name="Kumar C."/>
            <person name="Gnad F."/>
            <person name="Nielsen M.L."/>
            <person name="Rehman M."/>
            <person name="Walther T.C."/>
            <person name="Olsen J.V."/>
            <person name="Mann M."/>
        </authorList>
    </citation>
    <scope>ACETYLATION [LARGE SCALE ANALYSIS] AT LYS-295; LYS-303; LYS-406; LYS-505; LYS-540 AND LYS-644</scope>
    <scope>IDENTIFICATION BY MASS SPECTROMETRY [LARGE SCALE ANALYSIS]</scope>
</reference>
<reference key="12">
    <citation type="journal article" date="2011" name="BMC Syst. Biol.">
        <title>Initial characterization of the human central proteome.</title>
        <authorList>
            <person name="Burkard T.R."/>
            <person name="Planyavsky M."/>
            <person name="Kaupe I."/>
            <person name="Breitwieser F.P."/>
            <person name="Buerckstuemmer T."/>
            <person name="Bennett K.L."/>
            <person name="Superti-Furga G."/>
            <person name="Colinge J."/>
        </authorList>
    </citation>
    <scope>IDENTIFICATION BY MASS SPECTROMETRY [LARGE SCALE ANALYSIS]</scope>
</reference>
<reference key="13">
    <citation type="journal article" date="2012" name="PLoS ONE">
        <title>Human trifunctional protein alpha links cardiolipin remodeling to beta-oxidation.</title>
        <authorList>
            <person name="Taylor W.A."/>
            <person name="Mejia E.M."/>
            <person name="Mitchell R.W."/>
            <person name="Choy P.C."/>
            <person name="Sparagna G.C."/>
            <person name="Hatch G.M."/>
        </authorList>
    </citation>
    <scope>FUNCTION</scope>
    <scope>CATALYTIC ACTIVITY</scope>
    <scope>BIOPHYSICOCHEMICAL PROPERTIES</scope>
    <scope>INDUCTION</scope>
</reference>
<reference key="14">
    <citation type="journal article" date="2013" name="J. Proteome Res.">
        <title>Toward a comprehensive characterization of a human cancer cell phosphoproteome.</title>
        <authorList>
            <person name="Zhou H."/>
            <person name="Di Palma S."/>
            <person name="Preisinger C."/>
            <person name="Peng M."/>
            <person name="Polat A.N."/>
            <person name="Heck A.J."/>
            <person name="Mohammed S."/>
        </authorList>
    </citation>
    <scope>PHOSPHORYLATION [LARGE SCALE ANALYSIS] AT SER-756</scope>
    <scope>IDENTIFICATION BY MASS SPECTROMETRY [LARGE SCALE ANALYSIS]</scope>
    <source>
        <tissue>Cervix carcinoma</tissue>
        <tissue>Erythroleukemia</tissue>
    </source>
</reference>
<reference key="15">
    <citation type="journal article" date="2014" name="J. Proteomics">
        <title>An enzyme assisted RP-RPLC approach for in-depth analysis of human liver phosphoproteome.</title>
        <authorList>
            <person name="Bian Y."/>
            <person name="Song C."/>
            <person name="Cheng K."/>
            <person name="Dong M."/>
            <person name="Wang F."/>
            <person name="Huang J."/>
            <person name="Sun D."/>
            <person name="Wang L."/>
            <person name="Ye M."/>
            <person name="Zou H."/>
        </authorList>
    </citation>
    <scope>PHOSPHORYLATION [LARGE SCALE ANALYSIS] AT THR-395</scope>
    <scope>IDENTIFICATION BY MASS SPECTROMETRY [LARGE SCALE ANALYSIS]</scope>
    <source>
        <tissue>Liver</tissue>
    </source>
</reference>
<reference key="16">
    <citation type="journal article" date="2015" name="Proteomics">
        <title>N-terminome analysis of the human mitochondrial proteome.</title>
        <authorList>
            <person name="Vaca Jacome A.S."/>
            <person name="Rabilloud T."/>
            <person name="Schaeffer-Reiss C."/>
            <person name="Rompais M."/>
            <person name="Ayoub D."/>
            <person name="Lane L."/>
            <person name="Bairoch A."/>
            <person name="Van Dorsselaer A."/>
            <person name="Carapito C."/>
        </authorList>
    </citation>
    <scope>IDENTIFICATION BY MASS SPECTROMETRY [LARGE SCALE ANALYSIS]</scope>
</reference>
<reference key="17">
    <citation type="journal article" date="2018" name="Proc. Natl. Acad. Sci. U.S.A.">
        <title>Cryo-EM structure of human mitochondrial trifunctional protein.</title>
        <authorList>
            <person name="Liang K."/>
            <person name="Li N."/>
            <person name="Wang X."/>
            <person name="Dai J."/>
            <person name="Liu P."/>
            <person name="Wang C."/>
            <person name="Chen X.W."/>
            <person name="Gao N."/>
            <person name="Xiao J."/>
        </authorList>
    </citation>
    <scope>STRUCTURE BY ELECTRON MICROSCOPY (4.20 ANGSTROMS)</scope>
    <scope>FUNCTION</scope>
    <scope>SUBUNIT</scope>
    <scope>SUBCELLULAR LOCATION</scope>
</reference>
<reference key="18">
    <citation type="journal article" date="2019" name="Proc. Natl. Acad. Sci. U.S.A.">
        <title>Crystal structure of human mitochondrial trifunctional protein, a fatty acid beta-oxidation metabolon.</title>
        <authorList>
            <person name="Xia C."/>
            <person name="Fu Z."/>
            <person name="Battaile K.P."/>
            <person name="Kim J.P."/>
        </authorList>
    </citation>
    <scope>X-RAY CRYSTALLOGRAPHY (3.60 ANGSTROMS) OF 37-763</scope>
    <scope>FUNCTION</scope>
    <scope>SUBUNIT</scope>
    <scope>ACTIVE SITE</scope>
</reference>
<reference key="19">
    <citation type="journal article" date="1994" name="Biochim. Biophys. Acta">
        <title>Molecular basis of long-chain 3-hydroxyacyl-CoA dehydrogenase deficiency: identification of the major disease-causing mutation in the alpha-subunit of the mitochondrial trifunctional protein.</title>
        <authorList>
            <person name="Ijlst L."/>
            <person name="Wanders R.J.A."/>
            <person name="Ushikubo S."/>
            <person name="Kamijo T."/>
            <person name="Hashimoto T."/>
        </authorList>
    </citation>
    <scope>VARIANT LCHAD DEFICIENCY GLN-510</scope>
</reference>
<reference key="20">
    <citation type="journal article" date="1995" name="Proc. Natl. Acad. Sci. U.S.A.">
        <title>The molecular basis of pediatric long chain 3-hydroxyacyl-CoA dehydrogenase deficiency associated with maternal acute fatty liver of pregnancy.</title>
        <authorList>
            <person name="Sims H.F."/>
            <person name="Brackett J.C."/>
            <person name="Powell C.K."/>
            <person name="Treem W.R."/>
            <person name="Hale D.E."/>
            <person name="Bennett M.J."/>
            <person name="Gibson B."/>
            <person name="Shapiro S."/>
            <person name="Strauss A.W."/>
        </authorList>
    </citation>
    <scope>VARIANT AFLP GLN-510</scope>
</reference>
<reference key="21">
    <citation type="journal article" date="1996" name="J. Clin. Invest.">
        <title>Common missense mutation G1528C in long-chain 3-hydroxyacyl-CoA dehydrogenase deficiency. Characterization and expression of the mutant protein, mutation analysis on genomic DNA and chromosomal localization of the mitochondrial trifunctional protein alpha subunit gene.</title>
        <authorList>
            <person name="Ijlst L."/>
            <person name="Ruiter J.P.N."/>
            <person name="Hoovers J.M.N."/>
            <person name="Jakobs M.E."/>
            <person name="Wanders R.J.A."/>
        </authorList>
    </citation>
    <scope>CHARACTERIZATION OF VARIANT LCHAD DEFICIENCY GLN-510</scope>
</reference>
<reference key="22">
    <citation type="journal article" date="1997" name="J. Inherit. Metab. Dis.">
        <title>Molecular basis of long-chain 3-hydroxyacyl-CoA dehydrogenase deficiency: identification of two new mutations.</title>
        <authorList>
            <person name="Ijlst L."/>
            <person name="Oostheim W."/>
            <person name="Ruiter J.P.N."/>
            <person name="Wanders R.J.A."/>
        </authorList>
    </citation>
    <scope>VARIANTS LCHAD DEFICIENCY PRO-342 AND GLN-510</scope>
</reference>
<reference key="23">
    <citation type="journal article" date="1998" name="J. Clin. Invest.">
        <title>Mild trifunctional protein deficiency is associated with progressive neuropathy and myopathy and suggests a novel genotype-phenotype correlation.</title>
        <authorList>
            <person name="Ibdah J.A."/>
            <person name="Tein I."/>
            <person name="Dionisi-Vici C."/>
            <person name="Bennett M.J."/>
            <person name="Ijlst L."/>
            <person name="Gibson B."/>
            <person name="Wanders R.J.A."/>
            <person name="Strauss A.W."/>
        </authorList>
    </citation>
    <scope>VARIANTS MTPD1 ASP-282 AND ASN-305</scope>
</reference>
<reference key="24">
    <citation type="journal article" date="2019" name="Nat. Commun.">
        <title>TFPa/HADHA is required for fatty acid beta-oxidation and cardiolipin re-modeling in human cardiomyocytes.</title>
        <authorList>
            <person name="Miklas J.W."/>
            <person name="Clark E."/>
            <person name="Levy S."/>
            <person name="Detraux D."/>
            <person name="Leonard A."/>
            <person name="Beussman K."/>
            <person name="Showalter M.R."/>
            <person name="Smith A.T."/>
            <person name="Hofsteen P."/>
            <person name="Yang X."/>
            <person name="Macadangdang J."/>
            <person name="Manninen T."/>
            <person name="Raftery D."/>
            <person name="Madan A."/>
            <person name="Suomalainen A."/>
            <person name="Kim D.H."/>
            <person name="Murry C.E."/>
            <person name="Fiehn O."/>
            <person name="Sniadecki N.J."/>
            <person name="Wang Y."/>
            <person name="Ruohola-Baker H."/>
        </authorList>
    </citation>
    <scope>CHARACTERIZATION OF VARIANT LCHAD DEFICIENCY GLN-510</scope>
    <scope>FUNCTION</scope>
</reference>
<reference key="25">
    <citation type="journal article" date="2020" name="Nat. Commun.">
        <authorList>
            <person name="Miklas J.W."/>
            <person name="Clark E."/>
            <person name="Levy S."/>
            <person name="Detraux D."/>
            <person name="Leonard A."/>
            <person name="Beussman K."/>
            <person name="Showalter M.R."/>
            <person name="Smith A.T."/>
            <person name="Hofsteen P."/>
            <person name="Yang X."/>
            <person name="Macadangdang J."/>
            <person name="Manninen T."/>
            <person name="Raftery D."/>
            <person name="Madan A."/>
            <person name="Suomalainen A."/>
            <person name="Kim D.H."/>
            <person name="Murry C.E."/>
            <person name="Fiehn O."/>
            <person name="Sniadecki N.J."/>
            <person name="Wang Y."/>
            <person name="Ruohola-Baker H."/>
        </authorList>
    </citation>
    <scope>ERRATUM OF PUBMED:31604922</scope>
</reference>
<sequence length="763" mass="83000">MVACRAIGILSRFSAFRILRSRGYICRNFTGSSALLTRTHINYGVKGDVAVVRINSPNSKVNTLSKELHSEFSEVMNEIWASDQIRSAVLISSKPGCFIAGADINMLAACKTLQEVTQLSQEAQRIVEKLEKSTKPIVAAINGSCLGGGLEVAISCQYRIATKDRKTVLGTPEVLLGALPGAGGTQRLPKMVGVPAALDMMLTGRSIRADRAKKMGLVDQLVEPLGPGLKPPEERTIEYLEEVAITFAKGLADKKISPKRDKGLVEKLTAYAMTIPFVRQQVYKKVEEKVRKQTKGLYPAPLKIIDVVKTGIEQGSDAGYLCESQKFGELVMTKESKALMGLYHGQVLCKKNKFGAPQKDVKHLAILGAGLMGAGIAQVSVDKGLKTILKDATLTALDRGQQQVFKGLNDKVKKKALTSFERDSIFSNLTGQLDYQGFEKADMVIEAVFEDLSLKHRVLKEVEAVIPDHCIFASNTSALPISEIAAVSKRPEKVIGMHYFSPVDKMQLLEIITTEKTSKDTSASAVAVGLKQGKVIIVVKDGPGFYTTRCLAPMMSEVIRILQEGVDPKKLDSLTTSFGFPVGAATLVDEVGVDVAKHVAEDLGKVFGERFGGGNPELLTQMVSKGFLGRKSGKGFYIYQEGVKRKDLNSDMDSILASLKLPPKSEVSSDEDIQFRLVTRFVNEAVMCLQEGILATPAEGDIGAVFGLGFPPCLGGPFRFVDLYGAQKIVDRLKKYEAAYGKQFTPCQLLADHANSPNKKFYQ</sequence>
<protein>
    <recommendedName>
        <fullName>Trifunctional enzyme subunit alpha, mitochondrial</fullName>
    </recommendedName>
    <alternativeName>
        <fullName>78 kDa gastrin-binding protein</fullName>
    </alternativeName>
    <alternativeName>
        <fullName evidence="22">Monolysocardiolipin acyltransferase</fullName>
        <shortName evidence="21">MLCL AT</shortName>
        <ecNumber evidence="5">2.3.1.-</ecNumber>
    </alternativeName>
    <alternativeName>
        <fullName>TP-alpha</fullName>
    </alternativeName>
    <domain>
        <recommendedName>
            <fullName>Long-chain enoyl-CoA hydratase</fullName>
            <ecNumber evidence="4 11 12 13">4.2.1.17</ecNumber>
        </recommendedName>
    </domain>
    <domain>
        <recommendedName>
            <fullName>Long chain 3-hydroxyacyl-CoA dehydrogenase</fullName>
            <ecNumber evidence="4 11 12 13">1.1.1.211</ecNumber>
        </recommendedName>
    </domain>
</protein>
<dbReference type="EC" id="2.3.1.-" evidence="5"/>
<dbReference type="EC" id="4.2.1.17" evidence="4 11 12 13"/>
<dbReference type="EC" id="1.1.1.211" evidence="4 11 12 13"/>
<dbReference type="EMBL" id="D16480">
    <property type="protein sequence ID" value="BAA03941.1"/>
    <property type="molecule type" value="mRNA"/>
</dbReference>
<dbReference type="EMBL" id="U04627">
    <property type="protein sequence ID" value="AAA56664.1"/>
    <property type="molecule type" value="mRNA"/>
</dbReference>
<dbReference type="EMBL" id="AK302532">
    <property type="protein sequence ID" value="BAG63804.1"/>
    <property type="status" value="ALT_SEQ"/>
    <property type="molecule type" value="mRNA"/>
</dbReference>
<dbReference type="EMBL" id="AK313027">
    <property type="protein sequence ID" value="BAG35861.1"/>
    <property type="molecule type" value="mRNA"/>
</dbReference>
<dbReference type="EMBL" id="AC010896">
    <property type="protein sequence ID" value="AAY14643.1"/>
    <property type="molecule type" value="Genomic_DNA"/>
</dbReference>
<dbReference type="EMBL" id="AC011742">
    <property type="protein sequence ID" value="AAX93141.1"/>
    <property type="molecule type" value="Genomic_DNA"/>
</dbReference>
<dbReference type="EMBL" id="CH471053">
    <property type="protein sequence ID" value="EAX00703.1"/>
    <property type="molecule type" value="Genomic_DNA"/>
</dbReference>
<dbReference type="EMBL" id="BC009235">
    <property type="protein sequence ID" value="AAH09235.1"/>
    <property type="molecule type" value="mRNA"/>
</dbReference>
<dbReference type="EMBL" id="AB020811">
    <property type="protein sequence ID" value="BAA76735.1"/>
    <property type="molecule type" value="Genomic_DNA"/>
</dbReference>
<dbReference type="CCDS" id="CCDS1721.1">
    <molecule id="P40939-1"/>
</dbReference>
<dbReference type="PIR" id="JC2108">
    <property type="entry name" value="JC2108"/>
</dbReference>
<dbReference type="RefSeq" id="NP_000173.2">
    <molecule id="P40939-1"/>
    <property type="nucleotide sequence ID" value="NM_000182.4"/>
</dbReference>
<dbReference type="PDB" id="5ZQZ">
    <property type="method" value="EM"/>
    <property type="resolution" value="4.20 A"/>
    <property type="chains" value="A/C=1-763"/>
</dbReference>
<dbReference type="PDB" id="5ZRV">
    <property type="method" value="EM"/>
    <property type="resolution" value="7.70 A"/>
    <property type="chains" value="A/C/E/G=1-763"/>
</dbReference>
<dbReference type="PDB" id="6DV2">
    <property type="method" value="X-ray"/>
    <property type="resolution" value="3.60 A"/>
    <property type="chains" value="G/H/I/J/K/L=37-763"/>
</dbReference>
<dbReference type="PDBsum" id="5ZQZ"/>
<dbReference type="PDBsum" id="5ZRV"/>
<dbReference type="PDBsum" id="6DV2"/>
<dbReference type="EMDB" id="EMD-6940"/>
<dbReference type="EMDB" id="EMD-6944"/>
<dbReference type="SMR" id="P40939"/>
<dbReference type="BioGRID" id="109280">
    <property type="interactions" value="555"/>
</dbReference>
<dbReference type="ComplexPortal" id="CPX-6245">
    <property type="entry name" value="Mitochondrial trifunctional enzyme complex"/>
</dbReference>
<dbReference type="CORUM" id="P40939"/>
<dbReference type="FunCoup" id="P40939">
    <property type="interactions" value="1300"/>
</dbReference>
<dbReference type="IntAct" id="P40939">
    <property type="interactions" value="211"/>
</dbReference>
<dbReference type="MINT" id="P40939"/>
<dbReference type="STRING" id="9606.ENSP00000370023"/>
<dbReference type="ChEMBL" id="CHEMBL4295759"/>
<dbReference type="DrugBank" id="DB00157">
    <property type="generic name" value="NADH"/>
</dbReference>
<dbReference type="SwissLipids" id="SLP:000000247"/>
<dbReference type="GlyCosmos" id="P40939">
    <property type="glycosylation" value="2 sites, 2 glycans"/>
</dbReference>
<dbReference type="GlyGen" id="P40939">
    <property type="glycosylation" value="5 sites, 2 N-linked glycans (2 sites), 2 O-linked glycans (2 sites)"/>
</dbReference>
<dbReference type="iPTMnet" id="P40939"/>
<dbReference type="MetOSite" id="P40939"/>
<dbReference type="PhosphoSitePlus" id="P40939"/>
<dbReference type="SwissPalm" id="P40939"/>
<dbReference type="BioMuta" id="HADHA"/>
<dbReference type="DMDM" id="20141376"/>
<dbReference type="REPRODUCTION-2DPAGE" id="IPI00031522"/>
<dbReference type="CPTAC" id="CPTAC-214"/>
<dbReference type="CPTAC" id="CPTAC-215"/>
<dbReference type="jPOST" id="P40939"/>
<dbReference type="MassIVE" id="P40939"/>
<dbReference type="PaxDb" id="9606-ENSP00000370023"/>
<dbReference type="PeptideAtlas" id="P40939"/>
<dbReference type="PRIDE" id="P40939"/>
<dbReference type="ProteomicsDB" id="5539"/>
<dbReference type="ProteomicsDB" id="55392">
    <molecule id="P40939-1"/>
</dbReference>
<dbReference type="Pumba" id="P40939"/>
<dbReference type="Antibodypedia" id="3074">
    <property type="antibodies" value="221 antibodies from 32 providers"/>
</dbReference>
<dbReference type="DNASU" id="3030"/>
<dbReference type="Ensembl" id="ENST00000380649.8">
    <molecule id="P40939-1"/>
    <property type="protein sequence ID" value="ENSP00000370023.3"/>
    <property type="gene ID" value="ENSG00000084754.12"/>
</dbReference>
<dbReference type="Ensembl" id="ENST00000646483.1">
    <molecule id="P40939-2"/>
    <property type="protein sequence ID" value="ENSP00000496185.1"/>
    <property type="gene ID" value="ENSG00000084754.12"/>
</dbReference>
<dbReference type="GeneID" id="3030"/>
<dbReference type="KEGG" id="hsa:3030"/>
<dbReference type="MANE-Select" id="ENST00000380649.8">
    <property type="protein sequence ID" value="ENSP00000370023.3"/>
    <property type="RefSeq nucleotide sequence ID" value="NM_000182.5"/>
    <property type="RefSeq protein sequence ID" value="NP_000173.2"/>
</dbReference>
<dbReference type="UCSC" id="uc002rgy.3">
    <molecule id="P40939-1"/>
    <property type="organism name" value="human"/>
</dbReference>
<dbReference type="AGR" id="HGNC:4801"/>
<dbReference type="CTD" id="3030"/>
<dbReference type="DisGeNET" id="3030"/>
<dbReference type="GeneCards" id="HADHA"/>
<dbReference type="GeneReviews" id="HADHA"/>
<dbReference type="HGNC" id="HGNC:4801">
    <property type="gene designation" value="HADHA"/>
</dbReference>
<dbReference type="HPA" id="ENSG00000084754">
    <property type="expression patterns" value="Tissue enhanced (skeletal)"/>
</dbReference>
<dbReference type="MalaCards" id="HADHA"/>
<dbReference type="MIM" id="600890">
    <property type="type" value="gene"/>
</dbReference>
<dbReference type="MIM" id="609015">
    <property type="type" value="phenotype"/>
</dbReference>
<dbReference type="MIM" id="609016">
    <property type="type" value="phenotype"/>
</dbReference>
<dbReference type="neXtProt" id="NX_P40939"/>
<dbReference type="OpenTargets" id="ENSG00000084754"/>
<dbReference type="Orphanet" id="243367">
    <property type="disease" value="Acute fatty liver of pregnancy"/>
</dbReference>
<dbReference type="Orphanet" id="5">
    <property type="disease" value="Long chain 3-hydroxyacyl-CoA dehydrogenase deficiency"/>
</dbReference>
<dbReference type="Orphanet" id="746">
    <property type="disease" value="Mitochondrial trifunctional protein deficiency"/>
</dbReference>
<dbReference type="PharmGKB" id="PA29175"/>
<dbReference type="VEuPathDB" id="HostDB:ENSG00000084754"/>
<dbReference type="eggNOG" id="KOG1683">
    <property type="taxonomic scope" value="Eukaryota"/>
</dbReference>
<dbReference type="GeneTree" id="ENSGT00940000154677"/>
<dbReference type="HOGENOM" id="CLU_009834_16_1_1"/>
<dbReference type="InParanoid" id="P40939"/>
<dbReference type="OMA" id="ESTTIRW"/>
<dbReference type="OrthoDB" id="10004768at2759"/>
<dbReference type="PAN-GO" id="P40939">
    <property type="GO annotations" value="4 GO annotations based on evolutionary models"/>
</dbReference>
<dbReference type="PhylomeDB" id="P40939"/>
<dbReference type="TreeFam" id="TF352288"/>
<dbReference type="BioCyc" id="MetaCyc:HS01481-MONOMER"/>
<dbReference type="BRENDA" id="1.1.1.211">
    <property type="organism ID" value="2681"/>
</dbReference>
<dbReference type="PathwayCommons" id="P40939"/>
<dbReference type="Reactome" id="R-HSA-1482798">
    <property type="pathway name" value="Acyl chain remodeling of CL"/>
</dbReference>
<dbReference type="Reactome" id="R-HSA-77285">
    <property type="pathway name" value="Beta oxidation of myristoyl-CoA to lauroyl-CoA"/>
</dbReference>
<dbReference type="Reactome" id="R-HSA-77288">
    <property type="pathway name" value="mitochondrial fatty acid beta-oxidation of unsaturated fatty acids"/>
</dbReference>
<dbReference type="Reactome" id="R-HSA-77305">
    <property type="pathway name" value="Beta oxidation of palmitoyl-CoA to myristoyl-CoA"/>
</dbReference>
<dbReference type="Reactome" id="R-HSA-77310">
    <property type="pathway name" value="Beta oxidation of lauroyl-CoA to decanoyl-CoA-CoA"/>
</dbReference>
<dbReference type="Reactome" id="R-HSA-77346">
    <property type="pathway name" value="Beta oxidation of decanoyl-CoA to octanoyl-CoA-CoA"/>
</dbReference>
<dbReference type="Reactome" id="R-HSA-77348">
    <property type="pathway name" value="Beta oxidation of octanoyl-CoA to hexanoyl-CoA"/>
</dbReference>
<dbReference type="Reactome" id="R-HSA-77350">
    <property type="pathway name" value="Beta oxidation of hexanoyl-CoA to butanoyl-CoA"/>
</dbReference>
<dbReference type="SABIO-RK" id="P40939"/>
<dbReference type="SignaLink" id="P40939"/>
<dbReference type="UniPathway" id="UPA00659"/>
<dbReference type="BioGRID-ORCS" id="3030">
    <property type="hits" value="18 hits in 1162 CRISPR screens"/>
</dbReference>
<dbReference type="CD-CODE" id="FB4E32DD">
    <property type="entry name" value="Presynaptic clusters and postsynaptic densities"/>
</dbReference>
<dbReference type="ChiTaRS" id="HADHA">
    <property type="organism name" value="human"/>
</dbReference>
<dbReference type="GenomeRNAi" id="3030"/>
<dbReference type="Pharos" id="P40939">
    <property type="development level" value="Tbio"/>
</dbReference>
<dbReference type="PRO" id="PR:P40939"/>
<dbReference type="Proteomes" id="UP000005640">
    <property type="component" value="Chromosome 2"/>
</dbReference>
<dbReference type="RNAct" id="P40939">
    <property type="molecule type" value="protein"/>
</dbReference>
<dbReference type="Bgee" id="ENSG00000084754">
    <property type="expression patterns" value="Expressed in jejunal mucosa and 211 other cell types or tissues"/>
</dbReference>
<dbReference type="ExpressionAtlas" id="P40939">
    <property type="expression patterns" value="baseline and differential"/>
</dbReference>
<dbReference type="GO" id="GO:0016507">
    <property type="term" value="C:mitochondrial fatty acid beta-oxidation multienzyme complex"/>
    <property type="evidence" value="ECO:0000353"/>
    <property type="project" value="ComplexPortal"/>
</dbReference>
<dbReference type="GO" id="GO:0005743">
    <property type="term" value="C:mitochondrial inner membrane"/>
    <property type="evidence" value="ECO:0000314"/>
    <property type="project" value="ComplexPortal"/>
</dbReference>
<dbReference type="GO" id="GO:0042645">
    <property type="term" value="C:mitochondrial nucleoid"/>
    <property type="evidence" value="ECO:0000314"/>
    <property type="project" value="BHF-UCL"/>
</dbReference>
<dbReference type="GO" id="GO:0005739">
    <property type="term" value="C:mitochondrion"/>
    <property type="evidence" value="ECO:0000314"/>
    <property type="project" value="HPA"/>
</dbReference>
<dbReference type="GO" id="GO:0003857">
    <property type="term" value="F:3-hydroxyacyl-CoA dehydrogenase activity"/>
    <property type="evidence" value="ECO:0000304"/>
    <property type="project" value="ProtInc"/>
</dbReference>
<dbReference type="GO" id="GO:0003985">
    <property type="term" value="F:acetyl-CoA C-acetyltransferase activity"/>
    <property type="evidence" value="ECO:0000304"/>
    <property type="project" value="ProtInc"/>
</dbReference>
<dbReference type="GO" id="GO:0004300">
    <property type="term" value="F:enoyl-CoA hydratase activity"/>
    <property type="evidence" value="ECO:0000318"/>
    <property type="project" value="GO_Central"/>
</dbReference>
<dbReference type="GO" id="GO:0052816">
    <property type="term" value="F:long-chain fatty acyl-CoA hydrolase activity"/>
    <property type="evidence" value="ECO:0000314"/>
    <property type="project" value="UniProt"/>
</dbReference>
<dbReference type="GO" id="GO:0016509">
    <property type="term" value="F:long-chain-3-hydroxyacyl-CoA dehydrogenase activity"/>
    <property type="evidence" value="ECO:0000318"/>
    <property type="project" value="GO_Central"/>
</dbReference>
<dbReference type="GO" id="GO:0070403">
    <property type="term" value="F:NAD+ binding"/>
    <property type="evidence" value="ECO:0007669"/>
    <property type="project" value="InterPro"/>
</dbReference>
<dbReference type="GO" id="GO:0035965">
    <property type="term" value="P:cardiolipin acyl-chain remodeling"/>
    <property type="evidence" value="ECO:0000314"/>
    <property type="project" value="UniProtKB"/>
</dbReference>
<dbReference type="GO" id="GO:0006635">
    <property type="term" value="P:fatty acid beta-oxidation"/>
    <property type="evidence" value="ECO:0000314"/>
    <property type="project" value="ComplexPortal"/>
</dbReference>
<dbReference type="GO" id="GO:0032868">
    <property type="term" value="P:response to insulin"/>
    <property type="evidence" value="ECO:0007669"/>
    <property type="project" value="Ensembl"/>
</dbReference>
<dbReference type="CDD" id="cd06558">
    <property type="entry name" value="crotonase-like"/>
    <property type="match status" value="1"/>
</dbReference>
<dbReference type="FunFam" id="3.90.226.10:FF:000011">
    <property type="entry name" value="Fatty acid oxidation complex subunit alpha"/>
    <property type="match status" value="1"/>
</dbReference>
<dbReference type="FunFam" id="3.40.50.720:FF:000009">
    <property type="entry name" value="Fatty oxidation complex, alpha subunit"/>
    <property type="match status" value="1"/>
</dbReference>
<dbReference type="FunFam" id="1.10.1040.50:FF:000002">
    <property type="entry name" value="Trifunctional enzyme subunit alpha, mitochondrial"/>
    <property type="match status" value="1"/>
</dbReference>
<dbReference type="Gene3D" id="1.10.1040.50">
    <property type="match status" value="1"/>
</dbReference>
<dbReference type="Gene3D" id="3.90.226.10">
    <property type="entry name" value="2-enoyl-CoA Hydratase, Chain A, domain 1"/>
    <property type="match status" value="1"/>
</dbReference>
<dbReference type="Gene3D" id="3.40.50.720">
    <property type="entry name" value="NAD(P)-binding Rossmann-like Domain"/>
    <property type="match status" value="1"/>
</dbReference>
<dbReference type="InterPro" id="IPR006180">
    <property type="entry name" value="3-OHacyl-CoA_DH_CS"/>
</dbReference>
<dbReference type="InterPro" id="IPR006176">
    <property type="entry name" value="3-OHacyl-CoA_DH_NAD-bd"/>
</dbReference>
<dbReference type="InterPro" id="IPR006108">
    <property type="entry name" value="3HC_DH_C"/>
</dbReference>
<dbReference type="InterPro" id="IPR008927">
    <property type="entry name" value="6-PGluconate_DH-like_C_sf"/>
</dbReference>
<dbReference type="InterPro" id="IPR029045">
    <property type="entry name" value="ClpP/crotonase-like_dom_sf"/>
</dbReference>
<dbReference type="InterPro" id="IPR018376">
    <property type="entry name" value="Enoyl-CoA_hyd/isom_CS"/>
</dbReference>
<dbReference type="InterPro" id="IPR001753">
    <property type="entry name" value="Enoyl-CoA_hydra/iso"/>
</dbReference>
<dbReference type="InterPro" id="IPR012803">
    <property type="entry name" value="Fa_ox_alpha_mit"/>
</dbReference>
<dbReference type="InterPro" id="IPR050136">
    <property type="entry name" value="FA_oxidation_alpha_subunit"/>
</dbReference>
<dbReference type="InterPro" id="IPR036291">
    <property type="entry name" value="NAD(P)-bd_dom_sf"/>
</dbReference>
<dbReference type="NCBIfam" id="TIGR02441">
    <property type="entry name" value="fa_ox_alpha_mit"/>
    <property type="match status" value="1"/>
</dbReference>
<dbReference type="PANTHER" id="PTHR43612">
    <property type="entry name" value="TRIFUNCTIONAL ENZYME SUBUNIT ALPHA"/>
    <property type="match status" value="1"/>
</dbReference>
<dbReference type="PANTHER" id="PTHR43612:SF7">
    <property type="entry name" value="TRIFUNCTIONAL ENZYME SUBUNIT ALPHA, MITOCHONDRIAL"/>
    <property type="match status" value="1"/>
</dbReference>
<dbReference type="Pfam" id="PF00725">
    <property type="entry name" value="3HCDH"/>
    <property type="match status" value="2"/>
</dbReference>
<dbReference type="Pfam" id="PF02737">
    <property type="entry name" value="3HCDH_N"/>
    <property type="match status" value="1"/>
</dbReference>
<dbReference type="Pfam" id="PF00378">
    <property type="entry name" value="ECH_1"/>
    <property type="match status" value="1"/>
</dbReference>
<dbReference type="SUPFAM" id="SSF48179">
    <property type="entry name" value="6-phosphogluconate dehydrogenase C-terminal domain-like"/>
    <property type="match status" value="2"/>
</dbReference>
<dbReference type="SUPFAM" id="SSF52096">
    <property type="entry name" value="ClpP/crotonase"/>
    <property type="match status" value="1"/>
</dbReference>
<dbReference type="SUPFAM" id="SSF51735">
    <property type="entry name" value="NAD(P)-binding Rossmann-fold domains"/>
    <property type="match status" value="1"/>
</dbReference>
<dbReference type="PROSITE" id="PS00067">
    <property type="entry name" value="3HCDH"/>
    <property type="match status" value="1"/>
</dbReference>
<dbReference type="PROSITE" id="PS00166">
    <property type="entry name" value="ENOYL_COA_HYDRATASE"/>
    <property type="match status" value="1"/>
</dbReference>
<name>ECHA_HUMAN</name>
<comment type="function">
    <text evidence="4 5 6 7 8 11 19 20">Mitochondrial trifunctional enzyme catalyzes the last three of the four reactions of the mitochondrial beta-oxidation pathway (PubMed:1550553, PubMed:29915090, PubMed:30850536, PubMed:8135828, PubMed:31604922). The mitochondrial beta-oxidation pathway is the major energy-producing process in tissues and is performed through four consecutive reactions breaking down fatty acids into acetyl-CoA (PubMed:29915090). Among the enzymes involved in this pathway, the trifunctional enzyme exhibits specificity for long-chain fatty acids (PubMed:30850536, PubMed:31604922). Mitochondrial trifunctional enzyme is a heterotetrameric complex composed of two proteins, the trifunctional enzyme subunit alpha/HADHA described here carries the 2,3-enoyl-CoA hydratase and the 3-hydroxyacyl-CoA dehydrogenase activities while the trifunctional enzyme subunit beta/HADHB bears the 3-ketoacyl-CoA thiolase activity (PubMed:29915090, PubMed:30850536, PubMed:8135828). Independently of subunit beta, HADHA also exhibits a cardiolipin acyltransferase activity that participates in cardiolipin remodeling; cardiolipin is a major mitochondrial membrane phospholipid (PubMed:23152787, PubMed:31604922). HADHA may act downstream of Tafazzin/TAZ, that remodels monolysocardiolipin (MLCL) to a cardiolipin intermediate, and then HADHA may continue to remodel this species into mature tetralinoleoyl-cardiolipin (PubMed:31604922). Has also been proposed to act directly on MLCL; capable of acylating MLCL using different acyl-CoA substrates, with highest activity for oleoyl-CoA (PubMed:23152787).</text>
</comment>
<comment type="catalytic activity">
    <reaction evidence="4 11">
        <text>a (3S)-3-hydroxyacyl-CoA = a (2E)-enoyl-CoA + H2O</text>
        <dbReference type="Rhea" id="RHEA:16105"/>
        <dbReference type="ChEBI" id="CHEBI:15377"/>
        <dbReference type="ChEBI" id="CHEBI:57318"/>
        <dbReference type="ChEBI" id="CHEBI:58856"/>
        <dbReference type="EC" id="4.2.1.17"/>
    </reaction>
    <physiologicalReaction direction="right-to-left" evidence="4 11">
        <dbReference type="Rhea" id="RHEA:16107"/>
    </physiologicalReaction>
</comment>
<comment type="catalytic activity">
    <reaction evidence="4 11">
        <text>a 4-saturated-(3S)-3-hydroxyacyl-CoA = a (3E)-enoyl-CoA + H2O</text>
        <dbReference type="Rhea" id="RHEA:20724"/>
        <dbReference type="ChEBI" id="CHEBI:15377"/>
        <dbReference type="ChEBI" id="CHEBI:58521"/>
        <dbReference type="ChEBI" id="CHEBI:137480"/>
        <dbReference type="EC" id="4.2.1.17"/>
    </reaction>
    <physiologicalReaction direction="right-to-left" evidence="4 11">
        <dbReference type="Rhea" id="RHEA:20726"/>
    </physiologicalReaction>
</comment>
<comment type="catalytic activity">
    <reaction evidence="4 12">
        <text>(3S)-hydroxyoctanoyl-CoA = (2E)-octenoyl-CoA + H2O</text>
        <dbReference type="Rhea" id="RHEA:31199"/>
        <dbReference type="ChEBI" id="CHEBI:15377"/>
        <dbReference type="ChEBI" id="CHEBI:62242"/>
        <dbReference type="ChEBI" id="CHEBI:62617"/>
    </reaction>
    <physiologicalReaction direction="right-to-left" evidence="4 11">
        <dbReference type="Rhea" id="RHEA:31201"/>
    </physiologicalReaction>
</comment>
<comment type="catalytic activity">
    <reaction evidence="12">
        <text>(3S)-3-hydroxydodecanoyl-CoA = (2E)-dodecenoyl-CoA + H2O</text>
        <dbReference type="Rhea" id="RHEA:31075"/>
        <dbReference type="ChEBI" id="CHEBI:15377"/>
        <dbReference type="ChEBI" id="CHEBI:57330"/>
        <dbReference type="ChEBI" id="CHEBI:62558"/>
    </reaction>
    <physiologicalReaction direction="right-to-left" evidence="4 11">
        <dbReference type="Rhea" id="RHEA:31077"/>
    </physiologicalReaction>
</comment>
<comment type="catalytic activity">
    <reaction evidence="11 12 13">
        <text>(3S)-hydroxyhexadecanoyl-CoA = (2E)-hexadecenoyl-CoA + H2O</text>
        <dbReference type="Rhea" id="RHEA:31163"/>
        <dbReference type="ChEBI" id="CHEBI:15377"/>
        <dbReference type="ChEBI" id="CHEBI:61526"/>
        <dbReference type="ChEBI" id="CHEBI:62613"/>
    </reaction>
    <physiologicalReaction direction="right-to-left" evidence="4 11">
        <dbReference type="Rhea" id="RHEA:31165"/>
    </physiologicalReaction>
</comment>
<comment type="catalytic activity">
    <reaction evidence="4 11 12">
        <text>a long-chain (3S)-3-hydroxy fatty acyl-CoA + NAD(+) = a long-chain 3-oxo-fatty acyl-CoA + NADH + H(+)</text>
        <dbReference type="Rhea" id="RHEA:52656"/>
        <dbReference type="ChEBI" id="CHEBI:15378"/>
        <dbReference type="ChEBI" id="CHEBI:57540"/>
        <dbReference type="ChEBI" id="CHEBI:57945"/>
        <dbReference type="ChEBI" id="CHEBI:136757"/>
        <dbReference type="ChEBI" id="CHEBI:136758"/>
        <dbReference type="EC" id="1.1.1.211"/>
    </reaction>
    <physiologicalReaction direction="left-to-right" evidence="4 11">
        <dbReference type="Rhea" id="RHEA:52657"/>
    </physiologicalReaction>
</comment>
<comment type="catalytic activity">
    <reaction evidence="4 12">
        <text>(3S)-hydroxyoctanoyl-CoA + NAD(+) = 3-oxooctanoyl-CoA + NADH + H(+)</text>
        <dbReference type="Rhea" id="RHEA:31195"/>
        <dbReference type="ChEBI" id="CHEBI:15378"/>
        <dbReference type="ChEBI" id="CHEBI:57540"/>
        <dbReference type="ChEBI" id="CHEBI:57945"/>
        <dbReference type="ChEBI" id="CHEBI:62617"/>
        <dbReference type="ChEBI" id="CHEBI:62619"/>
    </reaction>
    <physiologicalReaction direction="left-to-right" evidence="4 11">
        <dbReference type="Rhea" id="RHEA:31196"/>
    </physiologicalReaction>
</comment>
<comment type="catalytic activity">
    <reaction evidence="18">
        <text>(3S)-hydroxydecanoyl-CoA + NAD(+) = 3-oxodecanoyl-CoA + NADH + H(+)</text>
        <dbReference type="Rhea" id="RHEA:31187"/>
        <dbReference type="ChEBI" id="CHEBI:15378"/>
        <dbReference type="ChEBI" id="CHEBI:57540"/>
        <dbReference type="ChEBI" id="CHEBI:57945"/>
        <dbReference type="ChEBI" id="CHEBI:62548"/>
        <dbReference type="ChEBI" id="CHEBI:62616"/>
    </reaction>
    <physiologicalReaction direction="left-to-right" evidence="4 11">
        <dbReference type="Rhea" id="RHEA:31188"/>
    </physiologicalReaction>
</comment>
<comment type="catalytic activity">
    <reaction evidence="12">
        <text>(3S)-3-hydroxydodecanoyl-CoA + NAD(+) = 3-oxododecanoyl-CoA + NADH + H(+)</text>
        <dbReference type="Rhea" id="RHEA:31179"/>
        <dbReference type="ChEBI" id="CHEBI:15378"/>
        <dbReference type="ChEBI" id="CHEBI:57540"/>
        <dbReference type="ChEBI" id="CHEBI:57945"/>
        <dbReference type="ChEBI" id="CHEBI:62558"/>
        <dbReference type="ChEBI" id="CHEBI:62615"/>
    </reaction>
    <physiologicalReaction direction="left-to-right" evidence="4 11">
        <dbReference type="Rhea" id="RHEA:31180"/>
    </physiologicalReaction>
</comment>
<comment type="catalytic activity">
    <reaction evidence="18">
        <text>(3S)-hydroxytetradecanoyl-CoA + NAD(+) = 3-oxotetradecanoyl-CoA + NADH + H(+)</text>
        <dbReference type="Rhea" id="RHEA:31167"/>
        <dbReference type="ChEBI" id="CHEBI:15378"/>
        <dbReference type="ChEBI" id="CHEBI:57540"/>
        <dbReference type="ChEBI" id="CHEBI:57945"/>
        <dbReference type="ChEBI" id="CHEBI:62543"/>
        <dbReference type="ChEBI" id="CHEBI:62614"/>
    </reaction>
    <physiologicalReaction direction="left-to-right" evidence="4 11">
        <dbReference type="Rhea" id="RHEA:31168"/>
    </physiologicalReaction>
</comment>
<comment type="catalytic activity">
    <reaction evidence="11 12 13">
        <text>(3S)-hydroxyhexadecanoyl-CoA + NAD(+) = 3-oxohexadecanoyl-CoA + NADH + H(+)</text>
        <dbReference type="Rhea" id="RHEA:31159"/>
        <dbReference type="ChEBI" id="CHEBI:15378"/>
        <dbReference type="ChEBI" id="CHEBI:57349"/>
        <dbReference type="ChEBI" id="CHEBI:57540"/>
        <dbReference type="ChEBI" id="CHEBI:57945"/>
        <dbReference type="ChEBI" id="CHEBI:62613"/>
    </reaction>
    <physiologicalReaction direction="left-to-right" evidence="4 11">
        <dbReference type="Rhea" id="RHEA:31160"/>
    </physiologicalReaction>
</comment>
<comment type="catalytic activity">
    <reaction evidence="5">
        <text>1'-[1,2-di-(9Z,12Z-octadecadienoyl)-sn-glycero-3-phospho]-3'-[1-(9Z,12Z-octadecadienoyl)-sn-glycero-3-phospho]-glycerol + hexadecanoyl-CoA = 1'-[1,2-di-(9Z,12Z-octadecadienoyl)-sn-glycero-3-phospho]-3'-[1-(9Z,12Z-octadecadienoyl)-2-hexadecanoyl-sn-glycero-3-phospho]-glycerol + CoA</text>
        <dbReference type="Rhea" id="RHEA:43680"/>
        <dbReference type="ChEBI" id="CHEBI:57287"/>
        <dbReference type="ChEBI" id="CHEBI:57379"/>
        <dbReference type="ChEBI" id="CHEBI:83580"/>
        <dbReference type="ChEBI" id="CHEBI:83583"/>
    </reaction>
    <physiologicalReaction direction="left-to-right" evidence="5">
        <dbReference type="Rhea" id="RHEA:43681"/>
    </physiologicalReaction>
</comment>
<comment type="catalytic activity">
    <reaction evidence="5">
        <text>1'-[1,2-di-(9Z,12Z-octadecadienoyl)-sn-glycero-3-phospho]-3'-[1-(9Z,12Z-octadecadienoyl)-sn-glycero-3-phospho]-glycerol + (9Z)-octadecenoyl-CoA = 1'-[1,2-di-(9Z,12Z-octadecadienoyl)-sn-glycero-3-phospho]-3'-[1-(9Z,12Z-octadecadienoyl)-2-(9Z-octadecenoyl)-sn-glycero-3-phospho]-glycerol + CoA</text>
        <dbReference type="Rhea" id="RHEA:43676"/>
        <dbReference type="ChEBI" id="CHEBI:57287"/>
        <dbReference type="ChEBI" id="CHEBI:57387"/>
        <dbReference type="ChEBI" id="CHEBI:83580"/>
        <dbReference type="ChEBI" id="CHEBI:83582"/>
    </reaction>
    <physiologicalReaction direction="left-to-right" evidence="5">
        <dbReference type="Rhea" id="RHEA:43677"/>
    </physiologicalReaction>
</comment>
<comment type="catalytic activity">
    <reaction evidence="5">
        <text>1'-[1,2-di-(9Z,12Z-octadecadienoyl)-sn-glycero-3-phospho]-3'-[1-(9Z,12Z-octadecadienoyl)-sn-glycero-3-phospho]-glycerol + (9Z,12Z)-octadecadienoyl-CoA = 1',3'-bis-[1,2-di-(9Z,12Z-octadecadienoyl)-sn-glycero-3-phospho]-glycerol + CoA</text>
        <dbReference type="Rhea" id="RHEA:43672"/>
        <dbReference type="ChEBI" id="CHEBI:57287"/>
        <dbReference type="ChEBI" id="CHEBI:57383"/>
        <dbReference type="ChEBI" id="CHEBI:83580"/>
        <dbReference type="ChEBI" id="CHEBI:83581"/>
    </reaction>
    <physiologicalReaction direction="left-to-right" evidence="5">
        <dbReference type="Rhea" id="RHEA:43673"/>
    </physiologicalReaction>
</comment>
<comment type="biophysicochemical properties">
    <kinetics>
        <KM evidence="5">18.1 uM for (9Z,12Z)-octadecadienoyl-CoA</KM>
        <KM evidence="5">51.8 uM for (9Z)-octadecenoyl-CoA</KM>
        <KM evidence="5">50.4 uM for hexadecanoyl-CoA</KM>
        <Vmax evidence="5">6.6 umol/min/mg enzyme for the monolysocardiolipin acyltransferase activity with (9Z,12Z)-octadecadienoyl-CoA as substrate</Vmax>
        <Vmax evidence="5">716.0 pmol/min/mg enzyme for the monolysocardiolipin acyltransferase activity with (9Z)-octadecenoyl-CoA as substrate</Vmax>
        <Vmax evidence="5">795.0 pmol/min/mg enzyme for the monolysocardiolipin acyltransferase activity with hexadecanoyl-CoA as substrate</Vmax>
    </kinetics>
</comment>
<comment type="pathway">
    <text evidence="4 11">Lipid metabolism; fatty acid beta-oxidation.</text>
</comment>
<comment type="subunit">
    <text evidence="2 6 7 12">Heterotetramer of 2 alpha/HADHA and 2 beta/HADHB subunits; forms the mitochondrial trifunctional enzyme (PubMed:29915090, PubMed:30850536). Also purified as higher order heterooligomers including a 4 alpha/HADHA and 4 beta/HADHB heterooligomer which physiological significance remains unclear (PubMed:29915090, PubMed:8163672). The mitochondrial trifunctional enzyme interacts with MTLN (By similarity).</text>
</comment>
<comment type="interaction">
    <interactant intactId="EBI-356720">
        <id>P40939</id>
    </interactant>
    <interactant intactId="EBI-712001">
        <id>O95166</id>
        <label>GABARAP</label>
    </interactant>
    <organismsDiffer>false</organismsDiffer>
    <experiments>5</experiments>
</comment>
<comment type="interaction">
    <interactant intactId="EBI-356720">
        <id>P40939</id>
    </interactant>
    <interactant intactId="EBI-746969">
        <id>Q9H0R8</id>
        <label>GABARAPL1</label>
    </interactant>
    <organismsDiffer>false</organismsDiffer>
    <experiments>4</experiments>
</comment>
<comment type="interaction">
    <interactant intactId="EBI-356720">
        <id>P40939</id>
    </interactant>
    <interactant intactId="EBI-720116">
        <id>P60520</id>
        <label>GABARAPL2</label>
    </interactant>
    <organismsDiffer>false</organismsDiffer>
    <experiments>4</experiments>
</comment>
<comment type="interaction">
    <interactant intactId="EBI-356720">
        <id>P40939</id>
    </interactant>
    <interactant intactId="EBI-356635">
        <id>P55084</id>
        <label>HADHB</label>
    </interactant>
    <organismsDiffer>false</organismsDiffer>
    <experiments>10</experiments>
</comment>
<comment type="interaction">
    <interactant intactId="EBI-356720">
        <id>P40939</id>
    </interactant>
    <interactant intactId="EBI-466029">
        <id>P42858</id>
        <label>HTT</label>
    </interactant>
    <organismsDiffer>false</organismsDiffer>
    <experiments>3</experiments>
</comment>
<comment type="interaction">
    <interactant intactId="EBI-356720">
        <id>P40939</id>
    </interactant>
    <interactant intactId="EBI-373144">
        <id>Q9GZQ8</id>
        <label>MAP1LC3B</label>
    </interactant>
    <organismsDiffer>false</organismsDiffer>
    <experiments>4</experiments>
</comment>
<comment type="subcellular location">
    <subcellularLocation>
        <location evidence="6">Mitochondrion</location>
    </subcellularLocation>
    <subcellularLocation>
        <location evidence="6">Mitochondrion inner membrane</location>
    </subcellularLocation>
    <text evidence="6">Protein stability and association with mitochondrion inner membrane do not require HADHB.</text>
</comment>
<comment type="alternative products">
    <event type="alternative splicing"/>
    <isoform>
        <id>P40939-1</id>
        <name>1</name>
        <sequence type="displayed"/>
    </isoform>
    <isoform>
        <id>P40939-2</id>
        <name>2</name>
        <sequence type="described" ref="VSP_059010 VSP_059011"/>
    </isoform>
</comment>
<comment type="induction">
    <text evidence="5">Up-regulated by thyroid hormone (at protein level).</text>
</comment>
<comment type="disease" evidence="16">
    <disease id="DI-02388">
        <name>Mitochondrial trifunctional protein deficiency 1</name>
        <acronym>MTPD1</acronym>
        <description>An autosomal recessive metabolic disorder of long-chain fatty acid oxidation, biochemically characterized by loss of all enzyme activities of the mitochondrial trifunctional protein complex. The disease phenotype ranges from a fatal form characterized by early-onset cardiomyopathy, cardiac failure and early death to less severe, late-onset forms with myopathy, recurrent rhabdomyolysis, and sensorimotor axonal neuropathy as key features.</description>
        <dbReference type="MIM" id="609015"/>
    </disease>
    <text>The disease is caused by variants affecting the gene represented in this entry.</text>
</comment>
<comment type="disease" evidence="9 15">
    <disease id="DI-01914">
        <name>Long-chain 3-hydroxyl-CoA dehydrogenase deficiency</name>
        <acronym>LCHAD deficiency</acronym>
        <description>The clinical features are very similar to TFP deficiency. Biochemically, LCHAD deficiency is characterized by reduced long-chain 3-hydroxyl-CoA dehydrogenase activity, while the other enzyme activities of the TFP complex are normal or only slightly reduced.</description>
        <dbReference type="MIM" id="609016"/>
    </disease>
    <text>The disease is caused by variants affecting the gene represented in this entry.</text>
</comment>
<comment type="disease" evidence="10">
    <disease id="DI-01942">
        <name>Maternal acute fatty liver of pregnancy</name>
        <acronym>AFLP</acronym>
        <description>Severe maternal illness occurring during pregnancies with affected fetuses. This disease is associated with LCHAD deficiency and characterized by sudden unexplained infant death or hypoglycemia and abnormal liver enzymes (Reye-like syndrome).</description>
        <dbReference type="MIM" id="609016"/>
    </disease>
    <text>The disease is caused by variants affecting the gene represented in this entry.</text>
</comment>
<comment type="miscellaneous">
    <molecule>Isoform 2</molecule>
    <text evidence="21">May be produced at very low levels due to a premature stop codon in the mRNA, leading to nonsense-mediated mRNA decay.</text>
</comment>
<comment type="similarity">
    <text evidence="21">In the N-terminal section; belongs to the enoyl-CoA hydratase/isomerase family.</text>
</comment>
<comment type="similarity">
    <text evidence="21">In the central section; belongs to the 3-hydroxyacyl-CoA dehydrogenase family.</text>
</comment>
<comment type="sequence caution" evidence="21">
    <conflict type="miscellaneous discrepancy">
        <sequence resource="EMBL-CDS" id="BAG63804"/>
    </conflict>
    <text>Wrong choice of frame.</text>
</comment>
<gene>
    <name type="primary">HADHA</name>
    <name type="synonym">HADH</name>
</gene>
<organism>
    <name type="scientific">Homo sapiens</name>
    <name type="common">Human</name>
    <dbReference type="NCBI Taxonomy" id="9606"/>
    <lineage>
        <taxon>Eukaryota</taxon>
        <taxon>Metazoa</taxon>
        <taxon>Chordata</taxon>
        <taxon>Craniata</taxon>
        <taxon>Vertebrata</taxon>
        <taxon>Euteleostomi</taxon>
        <taxon>Mammalia</taxon>
        <taxon>Eutheria</taxon>
        <taxon>Euarchontoglires</taxon>
        <taxon>Primates</taxon>
        <taxon>Haplorrhini</taxon>
        <taxon>Catarrhini</taxon>
        <taxon>Hominidae</taxon>
        <taxon>Homo</taxon>
    </lineage>
</organism>
<keyword id="KW-0002">3D-structure</keyword>
<keyword id="KW-0007">Acetylation</keyword>
<keyword id="KW-0025">Alternative splicing</keyword>
<keyword id="KW-0225">Disease variant</keyword>
<keyword id="KW-0276">Fatty acid metabolism</keyword>
<keyword id="KW-0443">Lipid metabolism</keyword>
<keyword id="KW-0456">Lyase</keyword>
<keyword id="KW-0472">Membrane</keyword>
<keyword id="KW-0488">Methylation</keyword>
<keyword id="KW-0496">Mitochondrion</keyword>
<keyword id="KW-0999">Mitochondrion inner membrane</keyword>
<keyword id="KW-0511">Multifunctional enzyme</keyword>
<keyword id="KW-0520">NAD</keyword>
<keyword id="KW-0560">Oxidoreductase</keyword>
<keyword id="KW-0597">Phosphoprotein</keyword>
<keyword id="KW-1267">Proteomics identification</keyword>
<keyword id="KW-1185">Reference proteome</keyword>
<keyword id="KW-0808">Transferase</keyword>
<keyword id="KW-0809">Transit peptide</keyword>
<proteinExistence type="evidence at protein level"/>
<feature type="transit peptide" description="Mitochondrion" evidence="3">
    <location>
        <begin position="1"/>
        <end position="36"/>
    </location>
</feature>
<feature type="chain" id="PRO_0000007403" description="Trifunctional enzyme subunit alpha, mitochondrial">
    <location>
        <begin position="37"/>
        <end position="763"/>
    </location>
</feature>
<feature type="active site" description="For hydroxyacyl-coenzyme A dehydrogenase activity" evidence="14">
    <location>
        <position position="510"/>
    </location>
</feature>
<feature type="site" description="Important for long-chain enoyl-CoA hydratase activity" evidence="23">
    <location>
        <position position="151"/>
    </location>
</feature>
<feature type="site" description="Important for long-chain enoyl-CoA hydratase activity" evidence="23">
    <location>
        <position position="173"/>
    </location>
</feature>
<feature type="site" description="Important for hydroxyacyl-coenzyme A dehydrogenase activity" evidence="23">
    <location>
        <position position="498"/>
    </location>
</feature>
<feature type="modified residue" description="N6-acetyllysine; alternate" evidence="2">
    <location>
        <position position="46"/>
    </location>
</feature>
<feature type="modified residue" description="N6-succinyllysine; alternate" evidence="2">
    <location>
        <position position="46"/>
    </location>
</feature>
<feature type="modified residue" description="N6-acetyllysine; alternate" evidence="2">
    <location>
        <position position="60"/>
    </location>
</feature>
<feature type="modified residue" description="N6-succinyllysine; alternate" evidence="2">
    <location>
        <position position="60"/>
    </location>
</feature>
<feature type="modified residue" description="N6-acetyllysine" evidence="2">
    <location>
        <position position="129"/>
    </location>
</feature>
<feature type="modified residue" description="N6-acetyllysine; alternate" evidence="2">
    <location>
        <position position="166"/>
    </location>
</feature>
<feature type="modified residue" description="N6-succinyllysine; alternate" evidence="2">
    <location>
        <position position="166"/>
    </location>
</feature>
<feature type="modified residue" description="N6-succinyllysine" evidence="2">
    <location>
        <position position="213"/>
    </location>
</feature>
<feature type="modified residue" description="N6-acetyllysine; alternate" evidence="2">
    <location>
        <position position="214"/>
    </location>
</feature>
<feature type="modified residue" description="N6-succinyllysine; alternate" evidence="2">
    <location>
        <position position="214"/>
    </location>
</feature>
<feature type="modified residue" description="N6-succinyllysine" evidence="2">
    <location>
        <position position="230"/>
    </location>
</feature>
<feature type="modified residue" description="N6-acetyllysine; alternate" evidence="2">
    <location>
        <position position="249"/>
    </location>
</feature>
<feature type="modified residue" description="N6-succinyllysine; alternate" evidence="2">
    <location>
        <position position="249"/>
    </location>
</feature>
<feature type="modified residue" description="N6-acetyllysine" evidence="2">
    <location>
        <position position="289"/>
    </location>
</feature>
<feature type="modified residue" description="N6-acetyllysine" evidence="24">
    <location>
        <position position="295"/>
    </location>
</feature>
<feature type="modified residue" description="N6-acetyllysine; alternate" evidence="24">
    <location>
        <position position="303"/>
    </location>
</feature>
<feature type="modified residue" description="N6-succinyllysine; alternate" evidence="2">
    <location>
        <position position="303"/>
    </location>
</feature>
<feature type="modified residue" description="Phosphoserine" evidence="2">
    <location>
        <position position="316"/>
    </location>
</feature>
<feature type="modified residue" description="N6-acetyllysine; alternate" evidence="2">
    <location>
        <position position="326"/>
    </location>
</feature>
<feature type="modified residue" description="N6-succinyllysine; alternate" evidence="2">
    <location>
        <position position="326"/>
    </location>
</feature>
<feature type="modified residue" description="N6-acetyllysine; alternate" evidence="2">
    <location>
        <position position="334"/>
    </location>
</feature>
<feature type="modified residue" description="N6-succinyllysine; alternate" evidence="2">
    <location>
        <position position="334"/>
    </location>
</feature>
<feature type="modified residue" description="N6-acetyllysine; alternate" evidence="2">
    <location>
        <position position="350"/>
    </location>
</feature>
<feature type="modified residue" description="N6-succinyllysine; alternate" evidence="2">
    <location>
        <position position="350"/>
    </location>
</feature>
<feature type="modified residue" description="N6-acetyllysine" evidence="2">
    <location>
        <position position="353"/>
    </location>
</feature>
<feature type="modified residue" description="Phosphothreonine" evidence="26">
    <location>
        <position position="395"/>
    </location>
</feature>
<feature type="modified residue" description="Omega-N-methylarginine" evidence="2">
    <location>
        <position position="399"/>
    </location>
</feature>
<feature type="modified residue" description="N6-acetyllysine; alternate" evidence="24">
    <location>
        <position position="406"/>
    </location>
</feature>
<feature type="modified residue" description="N6-succinyllysine; alternate" evidence="2">
    <location>
        <position position="406"/>
    </location>
</feature>
<feature type="modified residue" description="N6-acetyllysine; alternate" evidence="2">
    <location>
        <position position="411"/>
    </location>
</feature>
<feature type="modified residue" description="N6-succinyllysine; alternate" evidence="2">
    <location>
        <position position="411"/>
    </location>
</feature>
<feature type="modified residue" description="N6-succinyllysine" evidence="2">
    <location>
        <position position="415"/>
    </location>
</feature>
<feature type="modified residue" description="Phosphoserine" evidence="1">
    <location>
        <position position="419"/>
    </location>
</feature>
<feature type="modified residue" description="N6-succinyllysine" evidence="2">
    <location>
        <position position="440"/>
    </location>
</feature>
<feature type="modified residue" description="N6-acetyllysine; alternate" evidence="2">
    <location>
        <position position="460"/>
    </location>
</feature>
<feature type="modified residue" description="N6-succinyllysine; alternate" evidence="2">
    <location>
        <position position="460"/>
    </location>
</feature>
<feature type="modified residue" description="N6-acetyllysine; alternate" evidence="24">
    <location>
        <position position="505"/>
    </location>
</feature>
<feature type="modified residue" description="N6-succinyllysine; alternate" evidence="2">
    <location>
        <position position="505"/>
    </location>
</feature>
<feature type="modified residue" description="N6-acetyllysine; alternate" evidence="2">
    <location>
        <position position="519"/>
    </location>
</feature>
<feature type="modified residue" description="N6-succinyllysine; alternate" evidence="2">
    <location>
        <position position="519"/>
    </location>
</feature>
<feature type="modified residue" description="N6-acetyllysine" evidence="24">
    <location>
        <position position="540"/>
    </location>
</feature>
<feature type="modified residue" description="N6-acetyllysine; alternate" evidence="2">
    <location>
        <position position="569"/>
    </location>
</feature>
<feature type="modified residue" description="N6-succinyllysine; alternate" evidence="2">
    <location>
        <position position="569"/>
    </location>
</feature>
<feature type="modified residue" description="N6-succinyllysine" evidence="2">
    <location>
        <position position="634"/>
    </location>
</feature>
<feature type="modified residue" description="N6-acetyllysine; alternate" evidence="24">
    <location>
        <position position="644"/>
    </location>
</feature>
<feature type="modified residue" description="N6-succinyllysine; alternate" evidence="2">
    <location>
        <position position="644"/>
    </location>
</feature>
<feature type="modified residue" description="N6-succinyllysine" evidence="2">
    <location>
        <position position="646"/>
    </location>
</feature>
<feature type="modified residue" description="Phosphoserine" evidence="1">
    <location>
        <position position="650"/>
    </location>
</feature>
<feature type="modified residue" description="N6-acetyllysine; alternate" evidence="2">
    <location>
        <position position="664"/>
    </location>
</feature>
<feature type="modified residue" description="N6-succinyllysine; alternate" evidence="2">
    <location>
        <position position="664"/>
    </location>
</feature>
<feature type="modified residue" description="N6-acetyllysine; alternate" evidence="2">
    <location>
        <position position="728"/>
    </location>
</feature>
<feature type="modified residue" description="N6-succinyllysine; alternate" evidence="2">
    <location>
        <position position="728"/>
    </location>
</feature>
<feature type="modified residue" description="N6-acetyllysine" evidence="2">
    <location>
        <position position="735"/>
    </location>
</feature>
<feature type="modified residue" description="Phosphoserine" evidence="25">
    <location>
        <position position="756"/>
    </location>
</feature>
<feature type="modified residue" description="N6-acetyllysine; alternate" evidence="2">
    <location>
        <position position="759"/>
    </location>
</feature>
<feature type="modified residue" description="N6-succinyllysine; alternate" evidence="2">
    <location>
        <position position="759"/>
    </location>
</feature>
<feature type="splice variant" id="VSP_059010" description="In isoform 2." evidence="17">
    <original>VNTLSKELHSEFSEVMNEIWAS</original>
    <variation>HVSRLQDPSRSNTAITRSTENS</variation>
    <location>
        <begin position="61"/>
        <end position="82"/>
    </location>
</feature>
<feature type="splice variant" id="VSP_059011" description="In isoform 2." evidence="17">
    <location>
        <begin position="83"/>
        <end position="763"/>
    </location>
</feature>
<feature type="sequence variant" id="VAR_021125" description="In MTPD1; mild phenotype with slowly progressive myopathy and sensorimotor polyneuropathy; dbSNP:rs137852773." evidence="16">
    <original>V</original>
    <variation>D</variation>
    <location>
        <position position="282"/>
    </location>
</feature>
<feature type="sequence variant" id="VAR_021126" description="In MTPD1; mild phenotype with slowly progressive myopathy and sensorimotor polyneuropathy; dbSNP:rs137852774." evidence="16">
    <original>I</original>
    <variation>N</variation>
    <location>
        <position position="305"/>
    </location>
</feature>
<feature type="sequence variant" id="VAR_021127" description="In LCHAD deficiency; dbSNP:rs137852772." evidence="15">
    <original>L</original>
    <variation>P</variation>
    <location>
        <position position="342"/>
    </location>
</feature>
<feature type="sequence variant" id="VAR_048908" description="In dbSNP:rs2229420.">
    <original>Q</original>
    <variation>K</variation>
    <location>
        <position position="358"/>
    </location>
</feature>
<feature type="sequence variant" id="VAR_002273" description="In AFLP and LCHAD deficiency; loss of long-chain-3-hydroxyacyl-CoA dehydrogenase activity; abnormal cardiolipin remodeling with reduced formation of mature tetralinoleoyl-cardiolipin; sarcomere dissolution; loss of mitochondrial potential gradient; dbSNP:rs137852769." evidence="9 10 14 15">
    <original>E</original>
    <variation>Q</variation>
    <location>
        <position position="510"/>
    </location>
</feature>
<feature type="sequence conflict" description="In Ref. 1; BAA03941." evidence="21" ref="1">
    <original>L</original>
    <variation>V</variation>
    <location>
        <position position="146"/>
    </location>
</feature>
<feature type="sequence conflict" description="In Ref. 2; AAA56664." evidence="21" ref="2">
    <original>V</original>
    <variation>L</variation>
    <location>
        <position position="152"/>
    </location>
</feature>
<feature type="sequence conflict" description="In Ref. 2; AAA56664." evidence="21" ref="2">
    <original>T</original>
    <variation>A</variation>
    <location>
        <position position="171"/>
    </location>
</feature>
<feature type="sequence conflict" description="In Ref. 2; AAA56664." evidence="21" ref="2">
    <original>A</original>
    <variation>I</variation>
    <location>
        <position position="178"/>
    </location>
</feature>
<feature type="sequence conflict" description="In Ref. 2; AAA56664." evidence="21" ref="2">
    <original>AL</original>
    <variation>VF</variation>
    <location>
        <begin position="197"/>
        <end position="198"/>
    </location>
</feature>
<feature type="sequence conflict" description="In Ref. 2; AAA56664." evidence="21" ref="2">
    <original>S</original>
    <variation>N</variation>
    <location>
        <position position="206"/>
    </location>
</feature>
<feature type="sequence conflict" description="In Ref. 2; AAA56664." evidence="21" ref="2">
    <original>R</original>
    <variation>S</variation>
    <location>
        <position position="211"/>
    </location>
</feature>
<feature type="sequence conflict" description="In Ref. 2; AAA56664." evidence="21" ref="2">
    <original>T</original>
    <variation>P</variation>
    <location>
        <position position="576"/>
    </location>
</feature>
<feature type="sequence conflict" description="In Ref. 1; BAA03941." evidence="21" ref="1">
    <original>L</original>
    <variation>S</variation>
    <location>
        <position position="694"/>
    </location>
</feature>
<evidence type="ECO:0000250" key="1">
    <source>
        <dbReference type="UniProtKB" id="Q64428"/>
    </source>
</evidence>
<evidence type="ECO:0000250" key="2">
    <source>
        <dbReference type="UniProtKB" id="Q8BMS1"/>
    </source>
</evidence>
<evidence type="ECO:0000255" key="3"/>
<evidence type="ECO:0000269" key="4">
    <source>
    </source>
</evidence>
<evidence type="ECO:0000269" key="5">
    <source>
    </source>
</evidence>
<evidence type="ECO:0000269" key="6">
    <source>
    </source>
</evidence>
<evidence type="ECO:0000269" key="7">
    <source>
    </source>
</evidence>
<evidence type="ECO:0000269" key="8">
    <source>
    </source>
</evidence>
<evidence type="ECO:0000269" key="9">
    <source>
    </source>
</evidence>
<evidence type="ECO:0000269" key="10">
    <source>
    </source>
</evidence>
<evidence type="ECO:0000269" key="11">
    <source>
    </source>
</evidence>
<evidence type="ECO:0000269" key="12">
    <source>
    </source>
</evidence>
<evidence type="ECO:0000269" key="13">
    <source>
    </source>
</evidence>
<evidence type="ECO:0000269" key="14">
    <source>
    </source>
</evidence>
<evidence type="ECO:0000269" key="15">
    <source>
    </source>
</evidence>
<evidence type="ECO:0000269" key="16">
    <source>
    </source>
</evidence>
<evidence type="ECO:0000303" key="17">
    <source>
    </source>
</evidence>
<evidence type="ECO:0000303" key="18">
    <source>
    </source>
</evidence>
<evidence type="ECO:0000303" key="19">
    <source>
    </source>
</evidence>
<evidence type="ECO:0000303" key="20">
    <source>
    </source>
</evidence>
<evidence type="ECO:0000305" key="21"/>
<evidence type="ECO:0000305" key="22">
    <source>
    </source>
</evidence>
<evidence type="ECO:0000305" key="23">
    <source>
    </source>
</evidence>
<evidence type="ECO:0007744" key="24">
    <source>
    </source>
</evidence>
<evidence type="ECO:0007744" key="25">
    <source>
    </source>
</evidence>
<evidence type="ECO:0007744" key="26">
    <source>
    </source>
</evidence>
<accession>P40939</accession>
<accession>B2R7L4</accession>
<accession>B4DYP2</accession>
<accession>Q16679</accession>
<accession>Q53T69</accession>
<accession>Q53TA2</accession>
<accession>Q96GT7</accession>
<accession>Q9UQC5</accession>